<gene>
    <name type="primary">Rgs19</name>
</gene>
<sequence>MPTPHEAEKQHTGPEEADRPPSMSSHDAAPSGPPSRNPCCLCWCCCCSCSWNQERQRAWQVSRESKLQPLPSCEVCTPPSPKEVQSWAQSFDKLMHSPTGRSVFRAFLRTEYSEENMLFWLACEELKAEANQHVVDEKARLIYEDYVSILSPKEVSLDSRVREGINRKMQEPSPHTFDDAQLQIYTLMHRDSYPRFLTSPTYRSLLLQGAPQSSEA</sequence>
<proteinExistence type="evidence at protein level"/>
<comment type="function">
    <text evidence="1">Inhibits signal transduction by increasing the GTPase activity of G protein alpha subunits thereby driving them into their inactive GDP-bound form. Binds to G-alpha subfamily 1 members, with the order G(i)a3 &gt; G(i)a1 &gt; G(o)a &gt;&gt; G(z)a/G(i)a2. Activity on G(z)-alpha is inhibited by phosphorylation and palmitoylation of the G-protein (By similarity).</text>
</comment>
<comment type="subunit">
    <text evidence="3">Interacts with GIPC PDZ domain. Interacts with GNAO1.</text>
</comment>
<comment type="subcellular location">
    <subcellularLocation>
        <location evidence="1">Membrane</location>
        <topology evidence="1">Lipid-anchor</topology>
    </subcellularLocation>
</comment>
<comment type="PTM">
    <text evidence="1">Fatty acylated. Heavily palmitoylated in the cysteine string motif (By similarity).</text>
</comment>
<comment type="PTM">
    <text evidence="1">Phosphorylated, mainly on serine residues.</text>
</comment>
<name>RGS19_MOUSE</name>
<evidence type="ECO:0000250" key="1"/>
<evidence type="ECO:0000250" key="2">
    <source>
        <dbReference type="UniProtKB" id="O70521"/>
    </source>
</evidence>
<evidence type="ECO:0000250" key="3">
    <source>
        <dbReference type="UniProtKB" id="P49795"/>
    </source>
</evidence>
<evidence type="ECO:0000255" key="4">
    <source>
        <dbReference type="PROSITE-ProRule" id="PRU00171"/>
    </source>
</evidence>
<evidence type="ECO:0000256" key="5">
    <source>
        <dbReference type="SAM" id="MobiDB-lite"/>
    </source>
</evidence>
<evidence type="ECO:0000305" key="6"/>
<reference key="1">
    <citation type="journal article" date="2005" name="Science">
        <title>The transcriptional landscape of the mammalian genome.</title>
        <authorList>
            <person name="Carninci P."/>
            <person name="Kasukawa T."/>
            <person name="Katayama S."/>
            <person name="Gough J."/>
            <person name="Frith M.C."/>
            <person name="Maeda N."/>
            <person name="Oyama R."/>
            <person name="Ravasi T."/>
            <person name="Lenhard B."/>
            <person name="Wells C."/>
            <person name="Kodzius R."/>
            <person name="Shimokawa K."/>
            <person name="Bajic V.B."/>
            <person name="Brenner S.E."/>
            <person name="Batalov S."/>
            <person name="Forrest A.R."/>
            <person name="Zavolan M."/>
            <person name="Davis M.J."/>
            <person name="Wilming L.G."/>
            <person name="Aidinis V."/>
            <person name="Allen J.E."/>
            <person name="Ambesi-Impiombato A."/>
            <person name="Apweiler R."/>
            <person name="Aturaliya R.N."/>
            <person name="Bailey T.L."/>
            <person name="Bansal M."/>
            <person name="Baxter L."/>
            <person name="Beisel K.W."/>
            <person name="Bersano T."/>
            <person name="Bono H."/>
            <person name="Chalk A.M."/>
            <person name="Chiu K.P."/>
            <person name="Choudhary V."/>
            <person name="Christoffels A."/>
            <person name="Clutterbuck D.R."/>
            <person name="Crowe M.L."/>
            <person name="Dalla E."/>
            <person name="Dalrymple B.P."/>
            <person name="de Bono B."/>
            <person name="Della Gatta G."/>
            <person name="di Bernardo D."/>
            <person name="Down T."/>
            <person name="Engstrom P."/>
            <person name="Fagiolini M."/>
            <person name="Faulkner G."/>
            <person name="Fletcher C.F."/>
            <person name="Fukushima T."/>
            <person name="Furuno M."/>
            <person name="Futaki S."/>
            <person name="Gariboldi M."/>
            <person name="Georgii-Hemming P."/>
            <person name="Gingeras T.R."/>
            <person name="Gojobori T."/>
            <person name="Green R.E."/>
            <person name="Gustincich S."/>
            <person name="Harbers M."/>
            <person name="Hayashi Y."/>
            <person name="Hensch T.K."/>
            <person name="Hirokawa N."/>
            <person name="Hill D."/>
            <person name="Huminiecki L."/>
            <person name="Iacono M."/>
            <person name="Ikeo K."/>
            <person name="Iwama A."/>
            <person name="Ishikawa T."/>
            <person name="Jakt M."/>
            <person name="Kanapin A."/>
            <person name="Katoh M."/>
            <person name="Kawasawa Y."/>
            <person name="Kelso J."/>
            <person name="Kitamura H."/>
            <person name="Kitano H."/>
            <person name="Kollias G."/>
            <person name="Krishnan S.P."/>
            <person name="Kruger A."/>
            <person name="Kummerfeld S.K."/>
            <person name="Kurochkin I.V."/>
            <person name="Lareau L.F."/>
            <person name="Lazarevic D."/>
            <person name="Lipovich L."/>
            <person name="Liu J."/>
            <person name="Liuni S."/>
            <person name="McWilliam S."/>
            <person name="Madan Babu M."/>
            <person name="Madera M."/>
            <person name="Marchionni L."/>
            <person name="Matsuda H."/>
            <person name="Matsuzawa S."/>
            <person name="Miki H."/>
            <person name="Mignone F."/>
            <person name="Miyake S."/>
            <person name="Morris K."/>
            <person name="Mottagui-Tabar S."/>
            <person name="Mulder N."/>
            <person name="Nakano N."/>
            <person name="Nakauchi H."/>
            <person name="Ng P."/>
            <person name="Nilsson R."/>
            <person name="Nishiguchi S."/>
            <person name="Nishikawa S."/>
            <person name="Nori F."/>
            <person name="Ohara O."/>
            <person name="Okazaki Y."/>
            <person name="Orlando V."/>
            <person name="Pang K.C."/>
            <person name="Pavan W.J."/>
            <person name="Pavesi G."/>
            <person name="Pesole G."/>
            <person name="Petrovsky N."/>
            <person name="Piazza S."/>
            <person name="Reed J."/>
            <person name="Reid J.F."/>
            <person name="Ring B.Z."/>
            <person name="Ringwald M."/>
            <person name="Rost B."/>
            <person name="Ruan Y."/>
            <person name="Salzberg S.L."/>
            <person name="Sandelin A."/>
            <person name="Schneider C."/>
            <person name="Schoenbach C."/>
            <person name="Sekiguchi K."/>
            <person name="Semple C.A."/>
            <person name="Seno S."/>
            <person name="Sessa L."/>
            <person name="Sheng Y."/>
            <person name="Shibata Y."/>
            <person name="Shimada H."/>
            <person name="Shimada K."/>
            <person name="Silva D."/>
            <person name="Sinclair B."/>
            <person name="Sperling S."/>
            <person name="Stupka E."/>
            <person name="Sugiura K."/>
            <person name="Sultana R."/>
            <person name="Takenaka Y."/>
            <person name="Taki K."/>
            <person name="Tammoja K."/>
            <person name="Tan S.L."/>
            <person name="Tang S."/>
            <person name="Taylor M.S."/>
            <person name="Tegner J."/>
            <person name="Teichmann S.A."/>
            <person name="Ueda H.R."/>
            <person name="van Nimwegen E."/>
            <person name="Verardo R."/>
            <person name="Wei C.L."/>
            <person name="Yagi K."/>
            <person name="Yamanishi H."/>
            <person name="Zabarovsky E."/>
            <person name="Zhu S."/>
            <person name="Zimmer A."/>
            <person name="Hide W."/>
            <person name="Bult C."/>
            <person name="Grimmond S.M."/>
            <person name="Teasdale R.D."/>
            <person name="Liu E.T."/>
            <person name="Brusic V."/>
            <person name="Quackenbush J."/>
            <person name="Wahlestedt C."/>
            <person name="Mattick J.S."/>
            <person name="Hume D.A."/>
            <person name="Kai C."/>
            <person name="Sasaki D."/>
            <person name="Tomaru Y."/>
            <person name="Fukuda S."/>
            <person name="Kanamori-Katayama M."/>
            <person name="Suzuki M."/>
            <person name="Aoki J."/>
            <person name="Arakawa T."/>
            <person name="Iida J."/>
            <person name="Imamura K."/>
            <person name="Itoh M."/>
            <person name="Kato T."/>
            <person name="Kawaji H."/>
            <person name="Kawagashira N."/>
            <person name="Kawashima T."/>
            <person name="Kojima M."/>
            <person name="Kondo S."/>
            <person name="Konno H."/>
            <person name="Nakano K."/>
            <person name="Ninomiya N."/>
            <person name="Nishio T."/>
            <person name="Okada M."/>
            <person name="Plessy C."/>
            <person name="Shibata K."/>
            <person name="Shiraki T."/>
            <person name="Suzuki S."/>
            <person name="Tagami M."/>
            <person name="Waki K."/>
            <person name="Watahiki A."/>
            <person name="Okamura-Oho Y."/>
            <person name="Suzuki H."/>
            <person name="Kawai J."/>
            <person name="Hayashizaki Y."/>
        </authorList>
    </citation>
    <scope>NUCLEOTIDE SEQUENCE [LARGE SCALE MRNA]</scope>
    <source>
        <strain>C57BL/6J</strain>
        <tissue>Embryonic head</tissue>
    </source>
</reference>
<reference key="2">
    <citation type="journal article" date="2004" name="Genome Res.">
        <title>The status, quality, and expansion of the NIH full-length cDNA project: the Mammalian Gene Collection (MGC).</title>
        <authorList>
            <consortium name="The MGC Project Team"/>
        </authorList>
    </citation>
    <scope>NUCLEOTIDE SEQUENCE [LARGE SCALE MRNA]</scope>
    <source>
        <tissue>Mammary tumor</tissue>
    </source>
</reference>
<reference key="3">
    <citation type="journal article" date="2010" name="Cell">
        <title>A tissue-specific atlas of mouse protein phosphorylation and expression.</title>
        <authorList>
            <person name="Huttlin E.L."/>
            <person name="Jedrychowski M.P."/>
            <person name="Elias J.E."/>
            <person name="Goswami T."/>
            <person name="Rad R."/>
            <person name="Beausoleil S.A."/>
            <person name="Villen J."/>
            <person name="Haas W."/>
            <person name="Sowa M.E."/>
            <person name="Gygi S.P."/>
        </authorList>
    </citation>
    <scope>IDENTIFICATION BY MASS SPECTROMETRY [LARGE SCALE ANALYSIS]</scope>
    <source>
        <tissue>Spleen</tissue>
    </source>
</reference>
<organism>
    <name type="scientific">Mus musculus</name>
    <name type="common">Mouse</name>
    <dbReference type="NCBI Taxonomy" id="10090"/>
    <lineage>
        <taxon>Eukaryota</taxon>
        <taxon>Metazoa</taxon>
        <taxon>Chordata</taxon>
        <taxon>Craniata</taxon>
        <taxon>Vertebrata</taxon>
        <taxon>Euteleostomi</taxon>
        <taxon>Mammalia</taxon>
        <taxon>Eutheria</taxon>
        <taxon>Euarchontoglires</taxon>
        <taxon>Glires</taxon>
        <taxon>Rodentia</taxon>
        <taxon>Myomorpha</taxon>
        <taxon>Muroidea</taxon>
        <taxon>Muridae</taxon>
        <taxon>Murinae</taxon>
        <taxon>Mus</taxon>
        <taxon>Mus</taxon>
    </lineage>
</organism>
<dbReference type="EMBL" id="AK019401">
    <property type="protein sequence ID" value="BAB31703.1"/>
    <property type="molecule type" value="mRNA"/>
</dbReference>
<dbReference type="EMBL" id="BC003838">
    <property type="protein sequence ID" value="AAH03838.1"/>
    <property type="molecule type" value="mRNA"/>
</dbReference>
<dbReference type="CCDS" id="CCDS17220.1"/>
<dbReference type="RefSeq" id="NP_001278135.1">
    <property type="nucleotide sequence ID" value="NM_001291206.1"/>
</dbReference>
<dbReference type="RefSeq" id="NP_001278136.1">
    <property type="nucleotide sequence ID" value="NM_001291207.1"/>
</dbReference>
<dbReference type="RefSeq" id="NP_001278138.1">
    <property type="nucleotide sequence ID" value="NM_001291209.1"/>
</dbReference>
<dbReference type="RefSeq" id="NP_001278139.1">
    <property type="nucleotide sequence ID" value="NM_001291210.1"/>
</dbReference>
<dbReference type="RefSeq" id="NP_080722.1">
    <property type="nucleotide sequence ID" value="NM_026446.4"/>
</dbReference>
<dbReference type="RefSeq" id="XP_030107754.1">
    <property type="nucleotide sequence ID" value="XM_030251894.1"/>
</dbReference>
<dbReference type="SMR" id="Q9CX84"/>
<dbReference type="BioGRID" id="208006">
    <property type="interactions" value="2"/>
</dbReference>
<dbReference type="FunCoup" id="Q9CX84">
    <property type="interactions" value="335"/>
</dbReference>
<dbReference type="IntAct" id="Q9CX84">
    <property type="interactions" value="2"/>
</dbReference>
<dbReference type="MINT" id="Q9CX84"/>
<dbReference type="STRING" id="10090.ENSMUSP00000104408"/>
<dbReference type="GlyGen" id="Q9CX84">
    <property type="glycosylation" value="1 site, 1 O-linked glycan (1 site)"/>
</dbReference>
<dbReference type="iPTMnet" id="Q9CX84"/>
<dbReference type="PhosphoSitePlus" id="Q9CX84"/>
<dbReference type="SwissPalm" id="Q9CX84"/>
<dbReference type="jPOST" id="Q9CX84"/>
<dbReference type="PaxDb" id="10090-ENSMUSP00000002532"/>
<dbReference type="ProteomicsDB" id="255252"/>
<dbReference type="Pumba" id="Q9CX84"/>
<dbReference type="Antibodypedia" id="29985">
    <property type="antibodies" value="463 antibodies from 29 providers"/>
</dbReference>
<dbReference type="DNASU" id="56470"/>
<dbReference type="Ensembl" id="ENSMUST00000002532.9">
    <property type="protein sequence ID" value="ENSMUSP00000002532.3"/>
    <property type="gene ID" value="ENSMUSG00000002458.14"/>
</dbReference>
<dbReference type="Ensembl" id="ENSMUST00000108776.8">
    <property type="protein sequence ID" value="ENSMUSP00000104406.2"/>
    <property type="gene ID" value="ENSMUSG00000002458.14"/>
</dbReference>
<dbReference type="Ensembl" id="ENSMUST00000165416.8">
    <property type="protein sequence ID" value="ENSMUSP00000129026.2"/>
    <property type="gene ID" value="ENSMUSG00000002458.14"/>
</dbReference>
<dbReference type="GeneID" id="56470"/>
<dbReference type="KEGG" id="mmu:56470"/>
<dbReference type="UCSC" id="uc008onc.2">
    <property type="organism name" value="mouse"/>
</dbReference>
<dbReference type="AGR" id="MGI:1915153"/>
<dbReference type="CTD" id="10287"/>
<dbReference type="MGI" id="MGI:1915153">
    <property type="gene designation" value="Rgs19"/>
</dbReference>
<dbReference type="VEuPathDB" id="HostDB:ENSMUSG00000002458"/>
<dbReference type="eggNOG" id="KOG3589">
    <property type="taxonomic scope" value="Eukaryota"/>
</dbReference>
<dbReference type="GeneTree" id="ENSGT00940000160391"/>
<dbReference type="InParanoid" id="Q9CX84"/>
<dbReference type="OMA" id="EANQHMV"/>
<dbReference type="OrthoDB" id="10266999at2759"/>
<dbReference type="PhylomeDB" id="Q9CX84"/>
<dbReference type="TreeFam" id="TF315837"/>
<dbReference type="Reactome" id="R-MMU-416476">
    <property type="pathway name" value="G alpha (q) signalling events"/>
</dbReference>
<dbReference type="Reactome" id="R-MMU-418594">
    <property type="pathway name" value="G alpha (i) signalling events"/>
</dbReference>
<dbReference type="BioGRID-ORCS" id="56470">
    <property type="hits" value="2 hits in 79 CRISPR screens"/>
</dbReference>
<dbReference type="ChiTaRS" id="Rgs19">
    <property type="organism name" value="mouse"/>
</dbReference>
<dbReference type="PRO" id="PR:Q9CX84"/>
<dbReference type="Proteomes" id="UP000000589">
    <property type="component" value="Chromosome 2"/>
</dbReference>
<dbReference type="RNAct" id="Q9CX84">
    <property type="molecule type" value="protein"/>
</dbReference>
<dbReference type="Bgee" id="ENSMUSG00000002458">
    <property type="expression patterns" value="Expressed in granulocyte and 254 other cell types or tissues"/>
</dbReference>
<dbReference type="ExpressionAtlas" id="Q9CX84">
    <property type="expression patterns" value="baseline and differential"/>
</dbReference>
<dbReference type="GO" id="GO:0016020">
    <property type="term" value="C:membrane"/>
    <property type="evidence" value="ECO:0007669"/>
    <property type="project" value="UniProtKB-SubCell"/>
</dbReference>
<dbReference type="GO" id="GO:0009968">
    <property type="term" value="P:negative regulation of signal transduction"/>
    <property type="evidence" value="ECO:0007669"/>
    <property type="project" value="UniProtKB-KW"/>
</dbReference>
<dbReference type="FunFam" id="1.10.167.10:FF:000001">
    <property type="entry name" value="Putative regulator of g-protein signaling 12"/>
    <property type="match status" value="1"/>
</dbReference>
<dbReference type="FunFam" id="1.10.196.10:FF:000001">
    <property type="entry name" value="Regulator of G-protein signaling 8"/>
    <property type="match status" value="1"/>
</dbReference>
<dbReference type="Gene3D" id="1.10.196.10">
    <property type="match status" value="2"/>
</dbReference>
<dbReference type="Gene3D" id="1.10.167.10">
    <property type="entry name" value="Regulator of G-protein Signalling 4, domain 2"/>
    <property type="match status" value="1"/>
</dbReference>
<dbReference type="InterPro" id="IPR016137">
    <property type="entry name" value="RGS"/>
</dbReference>
<dbReference type="InterPro" id="IPR036305">
    <property type="entry name" value="RGS_sf"/>
</dbReference>
<dbReference type="InterPro" id="IPR024066">
    <property type="entry name" value="RGS_subdom1/3"/>
</dbReference>
<dbReference type="InterPro" id="IPR044926">
    <property type="entry name" value="RGS_subdomain_2"/>
</dbReference>
<dbReference type="PANTHER" id="PTHR10845">
    <property type="entry name" value="REGULATOR OF G PROTEIN SIGNALING"/>
    <property type="match status" value="1"/>
</dbReference>
<dbReference type="PANTHER" id="PTHR10845:SF145">
    <property type="entry name" value="REGULATOR OF G-PROTEIN SIGNALING 19"/>
    <property type="match status" value="1"/>
</dbReference>
<dbReference type="Pfam" id="PF00615">
    <property type="entry name" value="RGS"/>
    <property type="match status" value="1"/>
</dbReference>
<dbReference type="PRINTS" id="PR01301">
    <property type="entry name" value="RGSPROTEIN"/>
</dbReference>
<dbReference type="SMART" id="SM00315">
    <property type="entry name" value="RGS"/>
    <property type="match status" value="1"/>
</dbReference>
<dbReference type="SUPFAM" id="SSF48097">
    <property type="entry name" value="Regulator of G-protein signaling, RGS"/>
    <property type="match status" value="1"/>
</dbReference>
<dbReference type="PROSITE" id="PS50132">
    <property type="entry name" value="RGS"/>
    <property type="match status" value="1"/>
</dbReference>
<keyword id="KW-0449">Lipoprotein</keyword>
<keyword id="KW-0472">Membrane</keyword>
<keyword id="KW-0564">Palmitate</keyword>
<keyword id="KW-0597">Phosphoprotein</keyword>
<keyword id="KW-1185">Reference proteome</keyword>
<keyword id="KW-0734">Signal transduction inhibitor</keyword>
<feature type="chain" id="PRO_0000204230" description="Regulator of G-protein signaling 19">
    <location>
        <begin position="1"/>
        <end position="216"/>
    </location>
</feature>
<feature type="domain" description="RGS" evidence="4">
    <location>
        <begin position="90"/>
        <end position="206"/>
    </location>
</feature>
<feature type="region of interest" description="Disordered" evidence="5">
    <location>
        <begin position="1"/>
        <end position="30"/>
    </location>
</feature>
<feature type="region of interest" description="Interaction with GIPC" evidence="1">
    <location>
        <begin position="207"/>
        <end position="216"/>
    </location>
</feature>
<feature type="compositionally biased region" description="Basic and acidic residues" evidence="5">
    <location>
        <begin position="1"/>
        <end position="19"/>
    </location>
</feature>
<feature type="modified residue" description="Phosphoserine" evidence="2">
    <location>
        <position position="24"/>
    </location>
</feature>
<feature type="modified residue" description="Phosphoserine" evidence="3">
    <location>
        <position position="97"/>
    </location>
</feature>
<feature type="modified residue" description="Phosphoserine; by MAPK1 and MAPK3" evidence="3">
    <location>
        <position position="151"/>
    </location>
</feature>
<feature type="sequence conflict" description="In Ref. 2; AAH03838." evidence="6" ref="2">
    <original>K</original>
    <variation>E</variation>
    <location>
        <position position="82"/>
    </location>
</feature>
<protein>
    <recommendedName>
        <fullName>Regulator of G-protein signaling 19</fullName>
        <shortName>RGS19</shortName>
    </recommendedName>
</protein>
<accession>Q9CX84</accession>
<accession>Q99L50</accession>